<keyword id="KW-0067">ATP-binding</keyword>
<keyword id="KW-0436">Ligase</keyword>
<keyword id="KW-0547">Nucleotide-binding</keyword>
<keyword id="KW-0658">Purine biosynthesis</keyword>
<keyword id="KW-1185">Reference proteome</keyword>
<reference key="1">
    <citation type="journal article" date="2003" name="J. Bacteriol.">
        <title>Complete genome sequence of the ammonia-oxidizing bacterium and obligate chemolithoautotroph Nitrosomonas europaea.</title>
        <authorList>
            <person name="Chain P."/>
            <person name="Lamerdin J.E."/>
            <person name="Larimer F.W."/>
            <person name="Regala W."/>
            <person name="Lao V."/>
            <person name="Land M.L."/>
            <person name="Hauser L."/>
            <person name="Hooper A.B."/>
            <person name="Klotz M.G."/>
            <person name="Norton J."/>
            <person name="Sayavedra-Soto L.A."/>
            <person name="Arciero D.M."/>
            <person name="Hommes N.G."/>
            <person name="Whittaker M.M."/>
            <person name="Arp D.J."/>
        </authorList>
    </citation>
    <scope>NUCLEOTIDE SEQUENCE [LARGE SCALE GENOMIC DNA]</scope>
    <source>
        <strain>ATCC 19718 / CIP 103999 / KCTC 2705 / NBRC 14298</strain>
    </source>
</reference>
<name>PUR7_NITEU</name>
<sequence>MATAALFETSITSLPLLHRGKVRDIYAVDENHLLIIQTDRVSAFDVILPTPIPEKGKILTKISRFWFDKLAHIIPNHLTDITPESVVSSREQDQVSDRAFIVRKLKPLPVEAIVRGYISGSGWKDYQRSGTICGIALPAGLREADKIPDGAIFTPSTKAEAGSHDENISYSVCEQLLGVSLAAAVSRHSIALYTAAADYALTRSIIIADTKFEFGLDEANQLYLIDEALTPDSSRFWPAESYRPGKTPPSYDKQFIRDWLEQINWNKTPPAPPIPEEVLVQTIEKYQAACRVLTQ</sequence>
<organism>
    <name type="scientific">Nitrosomonas europaea (strain ATCC 19718 / CIP 103999 / KCTC 2705 / NBRC 14298)</name>
    <dbReference type="NCBI Taxonomy" id="228410"/>
    <lineage>
        <taxon>Bacteria</taxon>
        <taxon>Pseudomonadati</taxon>
        <taxon>Pseudomonadota</taxon>
        <taxon>Betaproteobacteria</taxon>
        <taxon>Nitrosomonadales</taxon>
        <taxon>Nitrosomonadaceae</taxon>
        <taxon>Nitrosomonas</taxon>
    </lineage>
</organism>
<comment type="catalytic activity">
    <reaction evidence="1">
        <text>5-amino-1-(5-phospho-D-ribosyl)imidazole-4-carboxylate + L-aspartate + ATP = (2S)-2-[5-amino-1-(5-phospho-beta-D-ribosyl)imidazole-4-carboxamido]succinate + ADP + phosphate + 2 H(+)</text>
        <dbReference type="Rhea" id="RHEA:22628"/>
        <dbReference type="ChEBI" id="CHEBI:15378"/>
        <dbReference type="ChEBI" id="CHEBI:29991"/>
        <dbReference type="ChEBI" id="CHEBI:30616"/>
        <dbReference type="ChEBI" id="CHEBI:43474"/>
        <dbReference type="ChEBI" id="CHEBI:58443"/>
        <dbReference type="ChEBI" id="CHEBI:77657"/>
        <dbReference type="ChEBI" id="CHEBI:456216"/>
        <dbReference type="EC" id="6.3.2.6"/>
    </reaction>
</comment>
<comment type="pathway">
    <text evidence="1">Purine metabolism; IMP biosynthesis via de novo pathway; 5-amino-1-(5-phospho-D-ribosyl)imidazole-4-carboxamide from 5-amino-1-(5-phospho-D-ribosyl)imidazole-4-carboxylate: step 1/2.</text>
</comment>
<comment type="similarity">
    <text evidence="1">Belongs to the SAICAR synthetase family.</text>
</comment>
<feature type="chain" id="PRO_0000100847" description="Phosphoribosylaminoimidazole-succinocarboxamide synthase">
    <location>
        <begin position="1"/>
        <end position="295"/>
    </location>
</feature>
<gene>
    <name evidence="1" type="primary">purC</name>
    <name type="ordered locus">NE0866</name>
</gene>
<evidence type="ECO:0000255" key="1">
    <source>
        <dbReference type="HAMAP-Rule" id="MF_00137"/>
    </source>
</evidence>
<accession>Q82W32</accession>
<dbReference type="EC" id="6.3.2.6" evidence="1"/>
<dbReference type="EMBL" id="AL954747">
    <property type="protein sequence ID" value="CAD84777.1"/>
    <property type="molecule type" value="Genomic_DNA"/>
</dbReference>
<dbReference type="RefSeq" id="WP_011111477.1">
    <property type="nucleotide sequence ID" value="NC_004757.1"/>
</dbReference>
<dbReference type="SMR" id="Q82W32"/>
<dbReference type="STRING" id="228410.NE0866"/>
<dbReference type="GeneID" id="87104057"/>
<dbReference type="KEGG" id="neu:NE0866"/>
<dbReference type="eggNOG" id="COG0152">
    <property type="taxonomic scope" value="Bacteria"/>
</dbReference>
<dbReference type="HOGENOM" id="CLU_045637_0_0_4"/>
<dbReference type="OrthoDB" id="9801549at2"/>
<dbReference type="PhylomeDB" id="Q82W32"/>
<dbReference type="UniPathway" id="UPA00074">
    <property type="reaction ID" value="UER00131"/>
</dbReference>
<dbReference type="Proteomes" id="UP000001416">
    <property type="component" value="Chromosome"/>
</dbReference>
<dbReference type="GO" id="GO:0005737">
    <property type="term" value="C:cytoplasm"/>
    <property type="evidence" value="ECO:0007669"/>
    <property type="project" value="TreeGrafter"/>
</dbReference>
<dbReference type="GO" id="GO:0005524">
    <property type="term" value="F:ATP binding"/>
    <property type="evidence" value="ECO:0007669"/>
    <property type="project" value="UniProtKB-KW"/>
</dbReference>
<dbReference type="GO" id="GO:0004639">
    <property type="term" value="F:phosphoribosylaminoimidazolesuccinocarboxamide synthase activity"/>
    <property type="evidence" value="ECO:0007669"/>
    <property type="project" value="UniProtKB-UniRule"/>
</dbReference>
<dbReference type="GO" id="GO:0006189">
    <property type="term" value="P:'de novo' IMP biosynthetic process"/>
    <property type="evidence" value="ECO:0007669"/>
    <property type="project" value="UniProtKB-UniRule"/>
</dbReference>
<dbReference type="CDD" id="cd01414">
    <property type="entry name" value="SAICAR_synt_Sc"/>
    <property type="match status" value="1"/>
</dbReference>
<dbReference type="FunFam" id="3.30.470.20:FF:000015">
    <property type="entry name" value="Phosphoribosylaminoimidazole-succinocarboxamide synthase"/>
    <property type="match status" value="1"/>
</dbReference>
<dbReference type="Gene3D" id="3.30.470.20">
    <property type="entry name" value="ATP-grasp fold, B domain"/>
    <property type="match status" value="1"/>
</dbReference>
<dbReference type="Gene3D" id="3.30.200.20">
    <property type="entry name" value="Phosphorylase Kinase, domain 1"/>
    <property type="match status" value="1"/>
</dbReference>
<dbReference type="HAMAP" id="MF_00137">
    <property type="entry name" value="SAICAR_synth"/>
    <property type="match status" value="1"/>
</dbReference>
<dbReference type="InterPro" id="IPR028923">
    <property type="entry name" value="SAICAR_synt/ADE2_N"/>
</dbReference>
<dbReference type="InterPro" id="IPR001636">
    <property type="entry name" value="SAICAR_synth"/>
</dbReference>
<dbReference type="InterPro" id="IPR018236">
    <property type="entry name" value="SAICAR_synthetase_CS"/>
</dbReference>
<dbReference type="NCBIfam" id="NF010568">
    <property type="entry name" value="PRK13961.1"/>
    <property type="match status" value="1"/>
</dbReference>
<dbReference type="NCBIfam" id="TIGR00081">
    <property type="entry name" value="purC"/>
    <property type="match status" value="1"/>
</dbReference>
<dbReference type="PANTHER" id="PTHR43700">
    <property type="entry name" value="PHOSPHORIBOSYLAMINOIMIDAZOLE-SUCCINOCARBOXAMIDE SYNTHASE"/>
    <property type="match status" value="1"/>
</dbReference>
<dbReference type="PANTHER" id="PTHR43700:SF1">
    <property type="entry name" value="PHOSPHORIBOSYLAMINOIMIDAZOLE-SUCCINOCARBOXAMIDE SYNTHASE"/>
    <property type="match status" value="1"/>
</dbReference>
<dbReference type="Pfam" id="PF01259">
    <property type="entry name" value="SAICAR_synt"/>
    <property type="match status" value="1"/>
</dbReference>
<dbReference type="SUPFAM" id="SSF56104">
    <property type="entry name" value="SAICAR synthase-like"/>
    <property type="match status" value="1"/>
</dbReference>
<dbReference type="PROSITE" id="PS01057">
    <property type="entry name" value="SAICAR_SYNTHETASE_1"/>
    <property type="match status" value="1"/>
</dbReference>
<dbReference type="PROSITE" id="PS01058">
    <property type="entry name" value="SAICAR_SYNTHETASE_2"/>
    <property type="match status" value="1"/>
</dbReference>
<protein>
    <recommendedName>
        <fullName evidence="1">Phosphoribosylaminoimidazole-succinocarboxamide synthase</fullName>
        <ecNumber evidence="1">6.3.2.6</ecNumber>
    </recommendedName>
    <alternativeName>
        <fullName evidence="1">SAICAR synthetase</fullName>
    </alternativeName>
</protein>
<proteinExistence type="inferred from homology"/>